<protein>
    <recommendedName>
        <fullName evidence="1">DNA-directed RNA polymerase subunit beta'</fullName>
        <shortName evidence="1">RNAP subunit beta'</shortName>
        <ecNumber evidence="1">2.7.7.6</ecNumber>
    </recommendedName>
    <alternativeName>
        <fullName evidence="1">RNA polymerase subunit beta'</fullName>
    </alternativeName>
    <alternativeName>
        <fullName evidence="1">Transcriptase subunit beta'</fullName>
    </alternativeName>
</protein>
<evidence type="ECO:0000255" key="1">
    <source>
        <dbReference type="HAMAP-Rule" id="MF_01324"/>
    </source>
</evidence>
<evidence type="ECO:0000256" key="2">
    <source>
        <dbReference type="SAM" id="MobiDB-lite"/>
    </source>
</evidence>
<dbReference type="EC" id="2.7.7.6" evidence="1"/>
<dbReference type="EMBL" id="CT971583">
    <property type="protein sequence ID" value="CAK24486.1"/>
    <property type="molecule type" value="Genomic_DNA"/>
</dbReference>
<dbReference type="SMR" id="A5GNH1"/>
<dbReference type="STRING" id="32051.SynWH7803_2060"/>
<dbReference type="KEGG" id="syx:SynWH7803_2060"/>
<dbReference type="eggNOG" id="COG0086">
    <property type="taxonomic scope" value="Bacteria"/>
</dbReference>
<dbReference type="HOGENOM" id="CLU_000524_1_0_3"/>
<dbReference type="OrthoDB" id="9815296at2"/>
<dbReference type="Proteomes" id="UP000001566">
    <property type="component" value="Chromosome"/>
</dbReference>
<dbReference type="GO" id="GO:0000428">
    <property type="term" value="C:DNA-directed RNA polymerase complex"/>
    <property type="evidence" value="ECO:0007669"/>
    <property type="project" value="UniProtKB-KW"/>
</dbReference>
<dbReference type="GO" id="GO:0003677">
    <property type="term" value="F:DNA binding"/>
    <property type="evidence" value="ECO:0007669"/>
    <property type="project" value="UniProtKB-UniRule"/>
</dbReference>
<dbReference type="GO" id="GO:0003899">
    <property type="term" value="F:DNA-directed RNA polymerase activity"/>
    <property type="evidence" value="ECO:0007669"/>
    <property type="project" value="UniProtKB-UniRule"/>
</dbReference>
<dbReference type="GO" id="GO:0008270">
    <property type="term" value="F:zinc ion binding"/>
    <property type="evidence" value="ECO:0007669"/>
    <property type="project" value="UniProtKB-UniRule"/>
</dbReference>
<dbReference type="GO" id="GO:0006351">
    <property type="term" value="P:DNA-templated transcription"/>
    <property type="evidence" value="ECO:0007669"/>
    <property type="project" value="UniProtKB-UniRule"/>
</dbReference>
<dbReference type="CDD" id="cd02655">
    <property type="entry name" value="RNAP_beta'_C"/>
    <property type="match status" value="1"/>
</dbReference>
<dbReference type="FunFam" id="1.10.150.390:FF:000002">
    <property type="entry name" value="DNA-directed RNA polymerase subunit beta"/>
    <property type="match status" value="1"/>
</dbReference>
<dbReference type="Gene3D" id="1.10.132.30">
    <property type="match status" value="1"/>
</dbReference>
<dbReference type="Gene3D" id="1.10.150.390">
    <property type="match status" value="1"/>
</dbReference>
<dbReference type="Gene3D" id="1.10.1790.20">
    <property type="match status" value="1"/>
</dbReference>
<dbReference type="Gene3D" id="2.40.50.100">
    <property type="match status" value="2"/>
</dbReference>
<dbReference type="Gene3D" id="1.10.274.100">
    <property type="entry name" value="RNA polymerase Rpb1, domain 3"/>
    <property type="match status" value="1"/>
</dbReference>
<dbReference type="HAMAP" id="MF_01324">
    <property type="entry name" value="RNApol_bact_RpoC2"/>
    <property type="match status" value="1"/>
</dbReference>
<dbReference type="InterPro" id="IPR012756">
    <property type="entry name" value="DNA-dir_RpoC2_beta_pp"/>
</dbReference>
<dbReference type="InterPro" id="IPR045867">
    <property type="entry name" value="DNA-dir_RpoC_beta_prime"/>
</dbReference>
<dbReference type="InterPro" id="IPR007066">
    <property type="entry name" value="RNA_pol_Rpb1_3"/>
</dbReference>
<dbReference type="InterPro" id="IPR042102">
    <property type="entry name" value="RNA_pol_Rpb1_3_sf"/>
</dbReference>
<dbReference type="InterPro" id="IPR007083">
    <property type="entry name" value="RNA_pol_Rpb1_4"/>
</dbReference>
<dbReference type="InterPro" id="IPR007081">
    <property type="entry name" value="RNA_pol_Rpb1_5"/>
</dbReference>
<dbReference type="InterPro" id="IPR038120">
    <property type="entry name" value="Rpb1_funnel_sf"/>
</dbReference>
<dbReference type="NCBIfam" id="NF002724">
    <property type="entry name" value="PRK02597.1"/>
    <property type="match status" value="1"/>
</dbReference>
<dbReference type="NCBIfam" id="TIGR02388">
    <property type="entry name" value="rpoC2_cyan"/>
    <property type="match status" value="1"/>
</dbReference>
<dbReference type="PANTHER" id="PTHR19376">
    <property type="entry name" value="DNA-DIRECTED RNA POLYMERASE"/>
    <property type="match status" value="1"/>
</dbReference>
<dbReference type="PANTHER" id="PTHR19376:SF54">
    <property type="entry name" value="DNA-DIRECTED RNA POLYMERASE SUBUNIT BETA"/>
    <property type="match status" value="1"/>
</dbReference>
<dbReference type="Pfam" id="PF04983">
    <property type="entry name" value="RNA_pol_Rpb1_3"/>
    <property type="match status" value="1"/>
</dbReference>
<dbReference type="Pfam" id="PF05000">
    <property type="entry name" value="RNA_pol_Rpb1_4"/>
    <property type="match status" value="1"/>
</dbReference>
<dbReference type="Pfam" id="PF04998">
    <property type="entry name" value="RNA_pol_Rpb1_5"/>
    <property type="match status" value="1"/>
</dbReference>
<dbReference type="SUPFAM" id="SSF64484">
    <property type="entry name" value="beta and beta-prime subunits of DNA dependent RNA-polymerase"/>
    <property type="match status" value="1"/>
</dbReference>
<gene>
    <name evidence="1" type="primary">rpoC2</name>
    <name type="ordered locus">SynWH7803_2060</name>
</gene>
<keyword id="KW-0240">DNA-directed RNA polymerase</keyword>
<keyword id="KW-0479">Metal-binding</keyword>
<keyword id="KW-0548">Nucleotidyltransferase</keyword>
<keyword id="KW-1185">Reference proteome</keyword>
<keyword id="KW-0804">Transcription</keyword>
<keyword id="KW-0808">Transferase</keyword>
<keyword id="KW-0862">Zinc</keyword>
<feature type="chain" id="PRO_0000353540" description="DNA-directed RNA polymerase subunit beta'">
    <location>
        <begin position="1"/>
        <end position="1363"/>
    </location>
</feature>
<feature type="region of interest" description="Disordered" evidence="2">
    <location>
        <begin position="1"/>
        <end position="39"/>
    </location>
</feature>
<feature type="compositionally biased region" description="Low complexity" evidence="2">
    <location>
        <begin position="14"/>
        <end position="24"/>
    </location>
</feature>
<feature type="binding site" evidence="1">
    <location>
        <position position="248"/>
    </location>
    <ligand>
        <name>Zn(2+)</name>
        <dbReference type="ChEBI" id="CHEBI:29105"/>
    </ligand>
</feature>
<feature type="binding site" evidence="1">
    <location>
        <position position="315"/>
    </location>
    <ligand>
        <name>Zn(2+)</name>
        <dbReference type="ChEBI" id="CHEBI:29105"/>
    </ligand>
</feature>
<feature type="binding site" evidence="1">
    <location>
        <position position="322"/>
    </location>
    <ligand>
        <name>Zn(2+)</name>
        <dbReference type="ChEBI" id="CHEBI:29105"/>
    </ligand>
</feature>
<feature type="binding site" evidence="1">
    <location>
        <position position="325"/>
    </location>
    <ligand>
        <name>Zn(2+)</name>
        <dbReference type="ChEBI" id="CHEBI:29105"/>
    </ligand>
</feature>
<reference key="1">
    <citation type="submission" date="2006-05" db="EMBL/GenBank/DDBJ databases">
        <authorList>
            <consortium name="Genoscope"/>
        </authorList>
    </citation>
    <scope>NUCLEOTIDE SEQUENCE [LARGE SCALE GENOMIC DNA]</scope>
    <source>
        <strain>WH7803</strain>
    </source>
</reference>
<organism>
    <name type="scientific">Synechococcus sp. (strain WH7803)</name>
    <dbReference type="NCBI Taxonomy" id="32051"/>
    <lineage>
        <taxon>Bacteria</taxon>
        <taxon>Bacillati</taxon>
        <taxon>Cyanobacteriota</taxon>
        <taxon>Cyanophyceae</taxon>
        <taxon>Synechococcales</taxon>
        <taxon>Synechococcaceae</taxon>
        <taxon>Synechococcus</taxon>
    </lineage>
</organism>
<name>RPOC2_SYNPW</name>
<sequence>MTSTPSKSRKSSKGSKAAKAAASAPETRPLAKTPPPFRNRVVDKKGLKQLVAWAYKHHGTAATSAMADQLKDLGFRYATQAAVSISVNDLKVPEAKQNLLGQAEELITATEESYRLGVITEVERHTKVIDTWTETNERLVDAVKKNFNQNDPLNSVWMMANSGARGNMSQVRQLVGMRGLMANPQGEIIDLPIRTNFREGLTVTEYVISSYGARKGLVDTALRTADSGYLTRRLVDVAQDVIVREDDCGTSRCILVKAEDGKYGNRLVGRLTADQVVGADGEVLAERNTEIDPPLSKRFEKAAVQAVSVRSPLTCEANRSVCRKCYGWALAHNELVDLGEAVGIIAAQSIGEPGTQLTMRTFHTGGVSTAETGVVRSKLEGTVEFGAKARVRPYRTPHGVNAQQAEVDFNLTIQPSGKGKPQKIEITNGSLLFVDNGQAIDADVTVAQIAAGAVKKSVEKATKDVICDLAGQVSYDPSIQPREVTDRQGNITHKAQRLGRMWVLAGDVYNLPPNARPVVTAGATVTEGQVLAEASQASEYGGAIRLREALGDSREVQIVTTAMTLRDFKLQGESTHAGEIWNLEAKDGTRYRLNTIPGSKIGSGEVVAELNDDRFRTQTGGLVRFAPGLAIKKARSAKNGYEVNKGGTLLWIPQETHEINKDISLLMITDGQWIEAGTEVVKDIFSQTAGIVTVTQKNDILREIIVRSGSFHLCTEKKALERFQGDGVMVNPGEPIAKGISTETMVYVQTVETPEGSGLLLRPVEEYTIPNEAQLPDLGHVKQPNGPHLGLKASQRLAFKDNELVKSVEGVELLRTQLMLETFDTTPQMTVDVEAVPDKRAKTIERLQLVILESILVRRDTISDSSHGSTHTELQVEDGQSIKAGEVIATTQILCKQEGVAQMPEATADEPVRRLIVERPEDTLTISTNSQPVVTVGQRIVDGEELAAGQPSDCCGEVEKVDSTSVTLRLGRPYMVSPDSLLHVRDGDLVQRGDGLALLVFERQKTGDIVQGLPRIEELLEARRPRESAILCKKPGTVEIKQGEDDENTTVTVIEADDAVSEYPILLGRNVMVSDSQQVTAGELLTDGPINPHELLECFFEDLRSRKPLMDAAQEAIAKLQHRLVTEVQNVYKSQGVSIDDKHIEVIVRQMTSKVRVEDAGDTTLLPGELIELRQVEDTNQAMSITGGAPAEFTPVLLGITKASLNTDSFISAASFQETTRVLTEAAIEGKSDWLRGLKENVIIGRLIPAGTGFSGFEEELKAEAGPHPDILAEDPAGYRRMQNLRPDYTVDMPAAPAGDATAVLDDPSDADMEATRSRHGIEAGSNFAAFARPDADNELKEEQVVDAEAVEGLQEEGLLSDE</sequence>
<accession>A5GNH1</accession>
<comment type="function">
    <text evidence="1">DNA-dependent RNA polymerase catalyzes the transcription of DNA into RNA using the four ribonucleoside triphosphates as substrates.</text>
</comment>
<comment type="catalytic activity">
    <reaction evidence="1">
        <text>RNA(n) + a ribonucleoside 5'-triphosphate = RNA(n+1) + diphosphate</text>
        <dbReference type="Rhea" id="RHEA:21248"/>
        <dbReference type="Rhea" id="RHEA-COMP:14527"/>
        <dbReference type="Rhea" id="RHEA-COMP:17342"/>
        <dbReference type="ChEBI" id="CHEBI:33019"/>
        <dbReference type="ChEBI" id="CHEBI:61557"/>
        <dbReference type="ChEBI" id="CHEBI:140395"/>
        <dbReference type="EC" id="2.7.7.6"/>
    </reaction>
</comment>
<comment type="cofactor">
    <cofactor evidence="1">
        <name>Zn(2+)</name>
        <dbReference type="ChEBI" id="CHEBI:29105"/>
    </cofactor>
    <text evidence="1">Binds 1 Zn(2+) ion per subunit.</text>
</comment>
<comment type="subunit">
    <text evidence="1">In cyanobacteria the RNAP catalytic core is composed of 2 alpha, 1 beta, 1 beta', 1 gamma and 1 omega subunit. When a sigma factor is associated with the core the holoenzyme is formed, which can initiate transcription.</text>
</comment>
<comment type="similarity">
    <text evidence="1">Belongs to the RNA polymerase beta' chain family. RpoC2 subfamily.</text>
</comment>
<proteinExistence type="inferred from homology"/>